<accession>Q62796</accession>
<accession>O55195</accession>
<organism>
    <name type="scientific">Rattus norvegicus</name>
    <name type="common">Rat</name>
    <dbReference type="NCBI Taxonomy" id="10116"/>
    <lineage>
        <taxon>Eukaryota</taxon>
        <taxon>Metazoa</taxon>
        <taxon>Chordata</taxon>
        <taxon>Craniata</taxon>
        <taxon>Vertebrata</taxon>
        <taxon>Euteleostomi</taxon>
        <taxon>Mammalia</taxon>
        <taxon>Eutheria</taxon>
        <taxon>Euarchontoglires</taxon>
        <taxon>Glires</taxon>
        <taxon>Rodentia</taxon>
        <taxon>Myomorpha</taxon>
        <taxon>Muroidea</taxon>
        <taxon>Muridae</taxon>
        <taxon>Murinae</taxon>
        <taxon>Rattus</taxon>
    </lineage>
</organism>
<feature type="initiator methionine" description="Removed" evidence="1">
    <location>
        <position position="1"/>
    </location>
</feature>
<feature type="chain" id="PRO_0000056735" description="RalA-binding protein 1">
    <location>
        <begin position="2"/>
        <end position="647"/>
    </location>
</feature>
<feature type="domain" description="Rho-GAP" evidence="4">
    <location>
        <begin position="192"/>
        <end position="380"/>
    </location>
</feature>
<feature type="region of interest" description="Disordered" evidence="5">
    <location>
        <begin position="1"/>
        <end position="151"/>
    </location>
</feature>
<feature type="region of interest" description="Nuclear localization signal" evidence="3">
    <location>
        <begin position="102"/>
        <end position="119"/>
    </location>
</feature>
<feature type="region of interest" description="Mediates association with membranes and could form transmembrane domains" evidence="1">
    <location>
        <begin position="154"/>
        <end position="219"/>
    </location>
</feature>
<feature type="region of interest" description="Disordered" evidence="5">
    <location>
        <begin position="163"/>
        <end position="186"/>
    </location>
</feature>
<feature type="region of interest" description="Mediates interaction with RALA and RALB" evidence="1">
    <location>
        <begin position="403"/>
        <end position="499"/>
    </location>
</feature>
<feature type="region of interest" description="Mediates interaction with REPS1 and REPS2" evidence="8 9">
    <location>
        <begin position="500"/>
        <end position="647"/>
    </location>
</feature>
<feature type="region of interest" description="Disordered" evidence="5">
    <location>
        <begin position="525"/>
        <end position="550"/>
    </location>
</feature>
<feature type="region of interest" description="Disordered" evidence="5">
    <location>
        <begin position="601"/>
        <end position="647"/>
    </location>
</feature>
<feature type="compositionally biased region" description="Polar residues" evidence="5">
    <location>
        <begin position="24"/>
        <end position="33"/>
    </location>
</feature>
<feature type="compositionally biased region" description="Basic and acidic residues" evidence="5">
    <location>
        <begin position="52"/>
        <end position="68"/>
    </location>
</feature>
<feature type="compositionally biased region" description="Basic residues" evidence="5">
    <location>
        <begin position="69"/>
        <end position="79"/>
    </location>
</feature>
<feature type="compositionally biased region" description="Basic residues" evidence="5">
    <location>
        <begin position="102"/>
        <end position="118"/>
    </location>
</feature>
<feature type="compositionally biased region" description="Basic and acidic residues" evidence="5">
    <location>
        <begin position="119"/>
        <end position="151"/>
    </location>
</feature>
<feature type="compositionally biased region" description="Acidic residues" evidence="5">
    <location>
        <begin position="535"/>
        <end position="550"/>
    </location>
</feature>
<feature type="compositionally biased region" description="Basic and acidic residues" evidence="5">
    <location>
        <begin position="628"/>
        <end position="647"/>
    </location>
</feature>
<feature type="binding site" evidence="1">
    <location>
        <begin position="69"/>
        <end position="74"/>
    </location>
    <ligand>
        <name>ATP</name>
        <dbReference type="ChEBI" id="CHEBI:30616"/>
    </ligand>
</feature>
<feature type="binding site" evidence="1">
    <location>
        <begin position="418"/>
        <end position="425"/>
    </location>
    <ligand>
        <name>ATP</name>
        <dbReference type="ChEBI" id="CHEBI:30616"/>
    </ligand>
</feature>
<feature type="site" description="Arginine finger; crucial for GTP hydrolysis by stabilizing the transition state" evidence="4">
    <location>
        <position position="232"/>
    </location>
</feature>
<feature type="modified residue" description="N-acetylthreonine" evidence="1">
    <location>
        <position position="2"/>
    </location>
</feature>
<feature type="modified residue" description="Phosphoserine" evidence="1">
    <location>
        <position position="29"/>
    </location>
</feature>
<feature type="modified residue" description="Phosphoserine" evidence="1">
    <location>
        <position position="30"/>
    </location>
</feature>
<feature type="modified residue" description="Phosphoserine" evidence="1">
    <location>
        <position position="34"/>
    </location>
</feature>
<feature type="modified residue" description="Phosphothreonine" evidence="1">
    <location>
        <position position="44"/>
    </location>
</feature>
<feature type="modified residue" description="Phosphoserine" evidence="16">
    <location>
        <position position="48"/>
    </location>
</feature>
<feature type="modified residue" description="Phosphoserine" evidence="16">
    <location>
        <position position="62"/>
    </location>
</feature>
<feature type="modified residue" description="Phosphoserine" evidence="1">
    <location>
        <position position="92"/>
    </location>
</feature>
<feature type="modified residue" description="Phosphoserine" evidence="1">
    <location>
        <position position="93"/>
    </location>
</feature>
<feature type="modified residue" description="Phosphoserine" evidence="1">
    <location>
        <position position="461"/>
    </location>
</feature>
<feature type="modified residue" description="Phosphoserine" evidence="16">
    <location>
        <position position="463"/>
    </location>
</feature>
<feature type="modified residue" description="Phosphoserine" evidence="1">
    <location>
        <position position="637"/>
    </location>
</feature>
<feature type="sequence conflict" description="In Ref. 2; AAB91537." evidence="13" ref="2">
    <original>E</original>
    <variation>G</variation>
    <location>
        <position position="40"/>
    </location>
</feature>
<feature type="sequence conflict" description="In Ref. 2; AAB91537." evidence="13" ref="2">
    <original>V</original>
    <variation>A</variation>
    <location>
        <position position="86"/>
    </location>
</feature>
<feature type="sequence conflict" description="In Ref. 2; AAB91537." evidence="13" ref="2">
    <original>F</original>
    <variation>L</variation>
    <location>
        <position position="154"/>
    </location>
</feature>
<feature type="sequence conflict" description="In Ref. 2; AAB91537." evidence="13" ref="2">
    <original>F</original>
    <variation>L</variation>
    <location>
        <position position="194"/>
    </location>
</feature>
<feature type="sequence conflict" description="In Ref. 2; AAB91537." evidence="13" ref="2">
    <original>L</original>
    <variation>V</variation>
    <location>
        <position position="372"/>
    </location>
</feature>
<feature type="sequence conflict" description="In Ref. 2; AAB91537." evidence="13" ref="2">
    <original>F</original>
    <variation>L</variation>
    <location>
        <position position="423"/>
    </location>
</feature>
<feature type="sequence conflict" description="In Ref. 2; AAB91537." evidence="13" ref="2">
    <original>R</original>
    <variation>P</variation>
    <location>
        <position position="516"/>
    </location>
</feature>
<sequence length="647" mass="75252">MTECFLPPTSSPSEHRRAEHGSGLTRTPSSEEISPTKFPELYRTGEPSPPHDILHEPPDIVSDDEKDHGKKKGKFKKKEKRTEGYVAFQEDSSGDEAESPSKMKRSKGIHVFKKPSFSKKKEKDFKIKEKPKEEKHKEEKHKEEKHKEKKCKDFTAADVVKQWKEKKKKKKPTQEPEVPQTDAPSLRPIFGAPFADAVERTMMYDGIRLPAVFRECVDYMEKHGMKCEGIYRVSGIKSKVDELKAAYDREESPNLEEYEPNTVASLLKQYLRDLPENLLTKELMPRFEEACGRTTEVEKVQEFQRLLRELPEYNHLLLSWLIVHMDHVIAKELETKMNIQNISIVLSPTVQISNRVLYVLFTHVQELFGTVLLKQVTRPLRWSNMATMPTLPETQAGIKEEIRRQEFLLNCLHRDLQGGIKDFSKEERLWEVQRILTALKRKLREAKRQECETKIAQEIASLSKEDVSKEETNENEEVINILLAQENEILTEQEELLAMEQFLRRQIASEKEEIDRLRAEIAEIQSRQHGRSETEEYSSDSESESEDEEELQIILEDLQRQNEELEIKNNHLNQAVHEEREAIVELRVQLRLLQMLRAKSEQQLQEEEEPERRGGTGPLPCEGVLEVRAAKEQAKPSPSKDRKETPI</sequence>
<evidence type="ECO:0000250" key="1">
    <source>
        <dbReference type="UniProtKB" id="Q15311"/>
    </source>
</evidence>
<evidence type="ECO:0000250" key="2">
    <source>
        <dbReference type="UniProtKB" id="Q62172"/>
    </source>
</evidence>
<evidence type="ECO:0000250" key="3">
    <source>
        <dbReference type="UniProtKB" id="Q9PT60"/>
    </source>
</evidence>
<evidence type="ECO:0000255" key="4">
    <source>
        <dbReference type="PROSITE-ProRule" id="PRU00172"/>
    </source>
</evidence>
<evidence type="ECO:0000256" key="5">
    <source>
        <dbReference type="SAM" id="MobiDB-lite"/>
    </source>
</evidence>
<evidence type="ECO:0000269" key="6">
    <source>
    </source>
</evidence>
<evidence type="ECO:0000269" key="7">
    <source>
    </source>
</evidence>
<evidence type="ECO:0000269" key="8">
    <source>
    </source>
</evidence>
<evidence type="ECO:0000269" key="9">
    <source>
    </source>
</evidence>
<evidence type="ECO:0000269" key="10">
    <source>
    </source>
</evidence>
<evidence type="ECO:0000303" key="11">
    <source>
    </source>
</evidence>
<evidence type="ECO:0000303" key="12">
    <source>
    </source>
</evidence>
<evidence type="ECO:0000305" key="13"/>
<evidence type="ECO:0000305" key="14">
    <source>
    </source>
</evidence>
<evidence type="ECO:0000312" key="15">
    <source>
        <dbReference type="RGD" id="621134"/>
    </source>
</evidence>
<evidence type="ECO:0007744" key="16">
    <source>
    </source>
</evidence>
<reference key="1">
    <citation type="journal article" date="1995" name="Mol. Cell. Biol.">
        <title>Identification and characterization of Ral-binding protein 1, a potential downstream target of Ral GTPases.</title>
        <authorList>
            <person name="Cantor S.B."/>
            <person name="Urano T."/>
            <person name="Feig L.A."/>
        </authorList>
    </citation>
    <scope>NUCLEOTIDE SEQUENCE [MRNA]</scope>
    <scope>FUNCTION</scope>
    <scope>INTERACTION WITH RALA</scope>
    <scope>TISSUE SPECIFICITY</scope>
    <scope>DOMAIN</scope>
    <source>
        <tissue>Brain</tissue>
    </source>
</reference>
<reference key="2">
    <citation type="journal article" date="1999" name="J. Cell Sci.">
        <title>Cytocentrin is a Ral-binding protein involved in the assembly and function of the mitotic apparatus.</title>
        <authorList>
            <person name="Quaroni A."/>
            <person name="Paul E.C.A."/>
        </authorList>
    </citation>
    <scope>NUCLEOTIDE SEQUENCE [MRNA]</scope>
    <scope>SUBCELLULAR LOCATION</scope>
</reference>
<reference key="3">
    <citation type="journal article" date="1997" name="J. Biol. Chem.">
        <title>An eps homology (EH) domain protein that binds to the ral-GTPase target, RalBP1.</title>
        <authorList>
            <person name="Yamaguchi A."/>
            <person name="Urano T."/>
            <person name="Goi T."/>
            <person name="Feig L.A."/>
        </authorList>
    </citation>
    <scope>INTERACTION WITH REPS1</scope>
    <scope>REGION</scope>
    <source>
        <tissue>Muscle</tissue>
    </source>
</reference>
<reference key="4">
    <citation type="journal article" date="1998" name="J. Biol. Chem.">
        <title>Identification and characterization of a novel protein interacting with Ral-binding protein 1, a putative effector protein of Ral.</title>
        <authorList>
            <person name="Ikeda M."/>
            <person name="Ishida O."/>
            <person name="Hinoi T."/>
            <person name="Kishida S."/>
            <person name="Kikuchi A."/>
        </authorList>
    </citation>
    <scope>FUNCTION</scope>
    <scope>INTERACTION WITH REPS2</scope>
    <scope>REGION</scope>
    <source>
        <tissue>Brain</tissue>
    </source>
</reference>
<reference key="5">
    <citation type="journal article" date="1999" name="EMBO J.">
        <title>Small G protein Ral and its downstream molecules regulate endocytosis of EGF and insulin receptors.</title>
        <authorList>
            <person name="Nakashima S."/>
            <person name="Morinaka K."/>
            <person name="Koyama S."/>
            <person name="Ikeda M."/>
            <person name="Kishida M."/>
            <person name="Okawa K."/>
            <person name="Iwamatsu A."/>
            <person name="Kishida S."/>
            <person name="Kikuchi A."/>
        </authorList>
    </citation>
    <scope>FUNCTION</scope>
</reference>
<reference key="6">
    <citation type="journal article" date="2012" name="Nat. Commun.">
        <title>Quantitative maps of protein phosphorylation sites across 14 different rat organs and tissues.</title>
        <authorList>
            <person name="Lundby A."/>
            <person name="Secher A."/>
            <person name="Lage K."/>
            <person name="Nordsborg N.B."/>
            <person name="Dmytriyev A."/>
            <person name="Lundby C."/>
            <person name="Olsen J.V."/>
        </authorList>
    </citation>
    <scope>PHOSPHORYLATION [LARGE SCALE ANALYSIS] AT SER-48; SER-62 AND SER-463</scope>
    <scope>IDENTIFICATION BY MASS SPECTROMETRY [LARGE SCALE ANALYSIS]</scope>
</reference>
<name>RBP1_RAT</name>
<proteinExistence type="evidence at protein level"/>
<comment type="function">
    <text evidence="1 6 7 9">Multifunctional protein that functions as a downstream effector of RALA and RALB. As a GTPase-activating protein/GAP can inactivate CDC42 and RAC1 by stimulating their GTPase activity (PubMed:7623849, PubMed:9422736). As part of the Ral signaling pathway, may also regulate ligand-dependent EGF and insulin receptors-mediated endocytosis (PubMed:10393179). During mitosis, may act as a scaffold protein in the phosphorylation of EPSIN/EPN1 by the mitotic kinase cyclin B-CDK1, preventing endocytosis during that phase of the cell cycle. During mitosis, also controls mitochondrial fission as an effector of RALA. Recruited to mitochondrion by RALA, acts as a scaffold to foster the mitotic kinase cyclin B-CDK1-mediated phosphorylation and activation of DNM1L (By similarity).</text>
</comment>
<comment type="function">
    <text evidence="1">Could also function as a primary ATP-dependent active transporter for glutathione conjugates of electrophiles. May also actively catalyze the efflux of a wide range of substrates including xenobiotics like doxorubicin (DOX) contributing to cell multidrug resistance.</text>
</comment>
<comment type="catalytic activity">
    <reaction evidence="1">
        <text>an S-substituted glutathione(in) + ATP + H2O = an S-substituted glutathione(out) + ADP + phosphate + H(+)</text>
        <dbReference type="Rhea" id="RHEA:19121"/>
        <dbReference type="ChEBI" id="CHEBI:15377"/>
        <dbReference type="ChEBI" id="CHEBI:15378"/>
        <dbReference type="ChEBI" id="CHEBI:30616"/>
        <dbReference type="ChEBI" id="CHEBI:43474"/>
        <dbReference type="ChEBI" id="CHEBI:90779"/>
        <dbReference type="ChEBI" id="CHEBI:456216"/>
        <dbReference type="EC" id="7.6.2.3"/>
    </reaction>
    <physiologicalReaction direction="left-to-right" evidence="1">
        <dbReference type="Rhea" id="RHEA:19122"/>
    </physiologicalReaction>
</comment>
<comment type="catalytic activity">
    <reaction evidence="1">
        <text>ATP + H2O + xenobioticSide 1 = ADP + phosphate + xenobioticSide 2.</text>
        <dbReference type="EC" id="7.6.2.2"/>
    </reaction>
</comment>
<comment type="catalytic activity">
    <reaction evidence="1">
        <text>leukotriene C4(in) + ATP + H2O = leukotriene C4(out) + ADP + phosphate + H(+)</text>
        <dbReference type="Rhea" id="RHEA:38963"/>
        <dbReference type="ChEBI" id="CHEBI:15377"/>
        <dbReference type="ChEBI" id="CHEBI:15378"/>
        <dbReference type="ChEBI" id="CHEBI:30616"/>
        <dbReference type="ChEBI" id="CHEBI:43474"/>
        <dbReference type="ChEBI" id="CHEBI:57973"/>
        <dbReference type="ChEBI" id="CHEBI:456216"/>
    </reaction>
    <physiologicalReaction direction="left-to-right" evidence="1">
        <dbReference type="Rhea" id="RHEA:38964"/>
    </physiologicalReaction>
</comment>
<comment type="subunit">
    <text evidence="1 7 8 9">Interacts with the GTP-bound form of RALA (via effector domain); during mitosis, recruits RALBP1 to the mitochondrion where it promotes DNM1L phosphorylation and mitochondrial fission (PubMed:7623849). Interacts with DNM1L; mediates its mitotic kinase cyclin B-CDK1-mediated phosphorylation during mitosis to promote mitochondrial fission. Interacts with the mitotic kinase cyclin B-CDK1 during mitosis. Interacts with the GTP-bound form of RALB (via effector domain) (By similarity). Interacts with REPS1; the interaction is direct and does not affect RALA-binding nor GTPase activator activity of RALBP1 (PubMed:9395447). Interacts with REPS2; the interaction is direct and does not affect RALA-binding nor GTPase activator activity of RALBP1 (PubMed:9422736). Interacts with EPN1, NUMB and TFAP2A during interphase and mitosis. Interacts with AP2M1; as part of the AP2 complex. Interacts with CDC42. Interacts with RAC1 (By similarity).</text>
</comment>
<comment type="interaction">
    <interactant intactId="EBI-3956409">
        <id>Q62796</id>
    </interactant>
    <interactant intactId="EBI-375001">
        <id>P24385</id>
        <label>CCND1</label>
    </interactant>
    <organismsDiffer>true</organismsDiffer>
    <experiments>2</experiments>
</comment>
<comment type="subcellular location">
    <subcellularLocation>
        <location evidence="1">Cell membrane</location>
        <topology evidence="1">Peripheral membrane protein</topology>
    </subcellularLocation>
    <subcellularLocation>
        <location evidence="10">Cytoplasm</location>
        <location evidence="10">Cytosol</location>
    </subcellularLocation>
    <subcellularLocation>
        <location evidence="10">Cytoplasm</location>
        <location evidence="10">Cytoskeleton</location>
        <location evidence="10">Spindle pole</location>
    </subcellularLocation>
    <subcellularLocation>
        <location evidence="1">Nucleus</location>
    </subcellularLocation>
    <subcellularLocation>
        <location evidence="1">Mitochondrion</location>
    </subcellularLocation>
    <text evidence="1 3 10">Cytosolic protein that transiently associates with the mitotic spindle poles in early prophase, and dissociates from them after completion of mitosis (PubMed:9973605). Targeted to the plasma membrane through its interaction with RALB, directed by FGF signaling. Docking on the membrane is required to transduce the Ral signal (By similarity). Recruited by RALA to the mitochondrion during mitosis where it regulates mitochondrial fission. Nuclear localization is cell cycle dependent while membrane localization is seen in adherent cells. The region involved in membrane association could form transmembrane domains and expose a part of the protein extracellularly (By similarity).</text>
</comment>
<comment type="tissue specificity">
    <text evidence="7">Ubiquitously expressed.</text>
</comment>
<comment type="domain">
    <text evidence="14">The Rho-GAP domain mediates the GTPase activator activity toward CDC42.</text>
</comment>
<comment type="PTM">
    <text evidence="2">Tyrosine-phosphorylated upon stimulation of cells with EGF.</text>
</comment>
<comment type="PTM">
    <text evidence="1">May undergo proteolytic cleavage to give peptides which reassemble to form a transporter complex.</text>
</comment>
<comment type="sequence caution" evidence="13">
    <conflict type="frameshift">
        <sequence resource="EMBL-CDS" id="AAB91537"/>
    </conflict>
</comment>
<keyword id="KW-0007">Acetylation</keyword>
<keyword id="KW-0067">ATP-binding</keyword>
<keyword id="KW-0131">Cell cycle</keyword>
<keyword id="KW-0132">Cell division</keyword>
<keyword id="KW-1003">Cell membrane</keyword>
<keyword id="KW-0963">Cytoplasm</keyword>
<keyword id="KW-0206">Cytoskeleton</keyword>
<keyword id="KW-0343">GTPase activation</keyword>
<keyword id="KW-0472">Membrane</keyword>
<keyword id="KW-0496">Mitochondrion</keyword>
<keyword id="KW-0498">Mitosis</keyword>
<keyword id="KW-0547">Nucleotide-binding</keyword>
<keyword id="KW-0539">Nucleus</keyword>
<keyword id="KW-0597">Phosphoprotein</keyword>
<keyword id="KW-1185">Reference proteome</keyword>
<keyword id="KW-1278">Translocase</keyword>
<keyword id="KW-0813">Transport</keyword>
<gene>
    <name evidence="15" type="primary">Ralbp1</name>
</gene>
<protein>
    <recommendedName>
        <fullName evidence="11">RalA-binding protein 1</fullName>
        <shortName evidence="11">RalBP1</shortName>
    </recommendedName>
    <alternativeName>
        <fullName evidence="12">Cytocentrin</fullName>
    </alternativeName>
    <alternativeName>
        <fullName evidence="1">Dinitrophenyl S-glutathione ATPase</fullName>
        <shortName evidence="1">DNP-SG ATPase</shortName>
        <ecNumber evidence="1">7.6.2.2</ecNumber>
        <ecNumber evidence="1">7.6.2.3</ecNumber>
    </alternativeName>
    <alternativeName>
        <fullName>Ral-interacting protein 1</fullName>
    </alternativeName>
</protein>
<dbReference type="EC" id="7.6.2.2" evidence="1"/>
<dbReference type="EC" id="7.6.2.3" evidence="1"/>
<dbReference type="EMBL" id="U28830">
    <property type="protein sequence ID" value="AAA80654.1"/>
    <property type="molecule type" value="mRNA"/>
</dbReference>
<dbReference type="EMBL" id="U82623">
    <property type="protein sequence ID" value="AAB91537.1"/>
    <property type="status" value="ALT_FRAME"/>
    <property type="molecule type" value="mRNA"/>
</dbReference>
<dbReference type="PIR" id="A57467">
    <property type="entry name" value="A57467"/>
</dbReference>
<dbReference type="RefSeq" id="NP_114456.1">
    <property type="nucleotide sequence ID" value="NM_032067.1"/>
</dbReference>
<dbReference type="SMR" id="Q62796"/>
<dbReference type="BioGRID" id="249880">
    <property type="interactions" value="2"/>
</dbReference>
<dbReference type="FunCoup" id="Q62796">
    <property type="interactions" value="3909"/>
</dbReference>
<dbReference type="IntAct" id="Q62796">
    <property type="interactions" value="3"/>
</dbReference>
<dbReference type="MINT" id="Q62796"/>
<dbReference type="STRING" id="10116.ENSRNOP00000033120"/>
<dbReference type="iPTMnet" id="Q62796"/>
<dbReference type="PhosphoSitePlus" id="Q62796"/>
<dbReference type="PaxDb" id="10116-ENSRNOP00000033120"/>
<dbReference type="GeneID" id="84014"/>
<dbReference type="KEGG" id="rno:84014"/>
<dbReference type="UCSC" id="RGD:621134">
    <property type="organism name" value="rat"/>
</dbReference>
<dbReference type="AGR" id="RGD:621134"/>
<dbReference type="CTD" id="10928"/>
<dbReference type="RGD" id="621134">
    <property type="gene designation" value="Ralbp1"/>
</dbReference>
<dbReference type="eggNOG" id="KOG4370">
    <property type="taxonomic scope" value="Eukaryota"/>
</dbReference>
<dbReference type="InParanoid" id="Q62796"/>
<dbReference type="PhylomeDB" id="Q62796"/>
<dbReference type="Reactome" id="R-RNO-9013148">
    <property type="pathway name" value="CDC42 GTPase cycle"/>
</dbReference>
<dbReference type="Reactome" id="R-RNO-9013149">
    <property type="pathway name" value="RAC1 GTPase cycle"/>
</dbReference>
<dbReference type="PRO" id="PR:Q62796"/>
<dbReference type="Proteomes" id="UP000002494">
    <property type="component" value="Unplaced"/>
</dbReference>
<dbReference type="GO" id="GO:0005829">
    <property type="term" value="C:cytosol"/>
    <property type="evidence" value="ECO:0007669"/>
    <property type="project" value="UniProtKB-SubCell"/>
</dbReference>
<dbReference type="GO" id="GO:0016020">
    <property type="term" value="C:membrane"/>
    <property type="evidence" value="ECO:0000266"/>
    <property type="project" value="RGD"/>
</dbReference>
<dbReference type="GO" id="GO:0005739">
    <property type="term" value="C:mitochondrion"/>
    <property type="evidence" value="ECO:0000250"/>
    <property type="project" value="UniProtKB"/>
</dbReference>
<dbReference type="GO" id="GO:0005634">
    <property type="term" value="C:nucleus"/>
    <property type="evidence" value="ECO:0007669"/>
    <property type="project" value="UniProtKB-SubCell"/>
</dbReference>
<dbReference type="GO" id="GO:0005886">
    <property type="term" value="C:plasma membrane"/>
    <property type="evidence" value="ECO:0007669"/>
    <property type="project" value="UniProtKB-SubCell"/>
</dbReference>
<dbReference type="GO" id="GO:0098685">
    <property type="term" value="C:Schaffer collateral - CA1 synapse"/>
    <property type="evidence" value="ECO:0000314"/>
    <property type="project" value="SynGO"/>
</dbReference>
<dbReference type="GO" id="GO:0000922">
    <property type="term" value="C:spindle pole"/>
    <property type="evidence" value="ECO:0007669"/>
    <property type="project" value="UniProtKB-SubCell"/>
</dbReference>
<dbReference type="GO" id="GO:0015431">
    <property type="term" value="F:ABC-type glutathione S-conjugate transporter activity"/>
    <property type="evidence" value="ECO:0007669"/>
    <property type="project" value="UniProtKB-EC"/>
</dbReference>
<dbReference type="GO" id="GO:0008559">
    <property type="term" value="F:ABC-type xenobiotic transporter activity"/>
    <property type="evidence" value="ECO:0007669"/>
    <property type="project" value="UniProtKB-EC"/>
</dbReference>
<dbReference type="GO" id="GO:0005524">
    <property type="term" value="F:ATP binding"/>
    <property type="evidence" value="ECO:0007669"/>
    <property type="project" value="UniProtKB-KW"/>
</dbReference>
<dbReference type="GO" id="GO:0042626">
    <property type="term" value="F:ATPase-coupled transmembrane transporter activity"/>
    <property type="evidence" value="ECO:0000266"/>
    <property type="project" value="RGD"/>
</dbReference>
<dbReference type="GO" id="GO:0005096">
    <property type="term" value="F:GTPase activator activity"/>
    <property type="evidence" value="ECO:0000314"/>
    <property type="project" value="UniProtKB"/>
</dbReference>
<dbReference type="GO" id="GO:0031267">
    <property type="term" value="F:small GTPase binding"/>
    <property type="evidence" value="ECO:0000353"/>
    <property type="project" value="UniProtKB"/>
</dbReference>
<dbReference type="GO" id="GO:0022857">
    <property type="term" value="F:transmembrane transporter activity"/>
    <property type="evidence" value="ECO:0000266"/>
    <property type="project" value="RGD"/>
</dbReference>
<dbReference type="GO" id="GO:0042910">
    <property type="term" value="F:xenobiotic transmembrane transporter activity"/>
    <property type="evidence" value="ECO:0000266"/>
    <property type="project" value="RGD"/>
</dbReference>
<dbReference type="GO" id="GO:0051301">
    <property type="term" value="P:cell division"/>
    <property type="evidence" value="ECO:0007669"/>
    <property type="project" value="UniProtKB-KW"/>
</dbReference>
<dbReference type="GO" id="GO:1900753">
    <property type="term" value="P:doxorubicin transport"/>
    <property type="evidence" value="ECO:0000266"/>
    <property type="project" value="RGD"/>
</dbReference>
<dbReference type="GO" id="GO:0006897">
    <property type="term" value="P:endocytosis"/>
    <property type="evidence" value="ECO:0000315"/>
    <property type="project" value="RGD"/>
</dbReference>
<dbReference type="GO" id="GO:0048662">
    <property type="term" value="P:negative regulation of smooth muscle cell proliferation"/>
    <property type="evidence" value="ECO:0000315"/>
    <property type="project" value="RGD"/>
</dbReference>
<dbReference type="GO" id="GO:0090141">
    <property type="term" value="P:positive regulation of mitochondrial fission"/>
    <property type="evidence" value="ECO:0000250"/>
    <property type="project" value="UniProtKB"/>
</dbReference>
<dbReference type="GO" id="GO:1903378">
    <property type="term" value="P:positive regulation of oxidative stress-induced neuron intrinsic apoptotic signaling pathway"/>
    <property type="evidence" value="ECO:0000315"/>
    <property type="project" value="RGD"/>
</dbReference>
<dbReference type="GO" id="GO:0001934">
    <property type="term" value="P:positive regulation of protein phosphorylation"/>
    <property type="evidence" value="ECO:0000250"/>
    <property type="project" value="UniProtKB"/>
</dbReference>
<dbReference type="GO" id="GO:0006898">
    <property type="term" value="P:receptor-mediated endocytosis"/>
    <property type="evidence" value="ECO:0000318"/>
    <property type="project" value="GO_Central"/>
</dbReference>
<dbReference type="GO" id="GO:0032489">
    <property type="term" value="P:regulation of Cdc42 protein signal transduction"/>
    <property type="evidence" value="ECO:0000314"/>
    <property type="project" value="UniProtKB"/>
</dbReference>
<dbReference type="GO" id="GO:0099072">
    <property type="term" value="P:regulation of postsynaptic membrane neurotransmitter receptor levels"/>
    <property type="evidence" value="ECO:0000314"/>
    <property type="project" value="SynGO"/>
</dbReference>
<dbReference type="GO" id="GO:0007264">
    <property type="term" value="P:small GTPase-mediated signal transduction"/>
    <property type="evidence" value="ECO:0000353"/>
    <property type="project" value="RGD"/>
</dbReference>
<dbReference type="GO" id="GO:0055085">
    <property type="term" value="P:transmembrane transport"/>
    <property type="evidence" value="ECO:0000266"/>
    <property type="project" value="RGD"/>
</dbReference>
<dbReference type="GO" id="GO:1990961">
    <property type="term" value="P:xenobiotic detoxification by transmembrane export across the plasma membrane"/>
    <property type="evidence" value="ECO:0000266"/>
    <property type="project" value="RGD"/>
</dbReference>
<dbReference type="CDD" id="cd04381">
    <property type="entry name" value="RhoGap_RalBP1"/>
    <property type="match status" value="1"/>
</dbReference>
<dbReference type="FunFam" id="1.10.555.10:FF:000027">
    <property type="entry name" value="RalA-binding protein 1"/>
    <property type="match status" value="1"/>
</dbReference>
<dbReference type="FunFam" id="1.20.58.90:FF:000001">
    <property type="entry name" value="ralA-binding protein 1"/>
    <property type="match status" value="1"/>
</dbReference>
<dbReference type="Gene3D" id="1.20.58.90">
    <property type="match status" value="1"/>
</dbReference>
<dbReference type="Gene3D" id="1.10.555.10">
    <property type="entry name" value="Rho GTPase activation protein"/>
    <property type="match status" value="1"/>
</dbReference>
<dbReference type="InterPro" id="IPR039767">
    <property type="entry name" value="RALBP1"/>
</dbReference>
<dbReference type="InterPro" id="IPR049041">
    <property type="entry name" value="RalBP1-like_Ral-bd"/>
</dbReference>
<dbReference type="InterPro" id="IPR008936">
    <property type="entry name" value="Rho_GTPase_activation_prot"/>
</dbReference>
<dbReference type="InterPro" id="IPR000198">
    <property type="entry name" value="RhoGAP_dom"/>
</dbReference>
<dbReference type="PANTHER" id="PTHR12783">
    <property type="entry name" value="RALA BINDING PROTEIN 1 RALBP1"/>
    <property type="match status" value="1"/>
</dbReference>
<dbReference type="PANTHER" id="PTHR12783:SF5">
    <property type="entry name" value="RALA-BINDING PROTEIN 1"/>
    <property type="match status" value="1"/>
</dbReference>
<dbReference type="Pfam" id="PF00620">
    <property type="entry name" value="RhoGAP"/>
    <property type="match status" value="1"/>
</dbReference>
<dbReference type="Pfam" id="PF20924">
    <property type="entry name" value="RLIP76_Ral-bd"/>
    <property type="match status" value="1"/>
</dbReference>
<dbReference type="SMART" id="SM00324">
    <property type="entry name" value="RhoGAP"/>
    <property type="match status" value="1"/>
</dbReference>
<dbReference type="SUPFAM" id="SSF48350">
    <property type="entry name" value="GTPase activation domain, GAP"/>
    <property type="match status" value="1"/>
</dbReference>
<dbReference type="PROSITE" id="PS50238">
    <property type="entry name" value="RHOGAP"/>
    <property type="match status" value="1"/>
</dbReference>